<feature type="chain" id="PRO_0000341105" description="D-alanine--D-alanine ligase">
    <location>
        <begin position="1"/>
        <end position="297"/>
    </location>
</feature>
<feature type="domain" description="ATP-grasp" evidence="2">
    <location>
        <begin position="95"/>
        <end position="294"/>
    </location>
</feature>
<feature type="binding site" evidence="2">
    <location>
        <begin position="125"/>
        <end position="180"/>
    </location>
    <ligand>
        <name>ATP</name>
        <dbReference type="ChEBI" id="CHEBI:30616"/>
    </ligand>
</feature>
<feature type="binding site" evidence="2">
    <location>
        <position position="248"/>
    </location>
    <ligand>
        <name>Mg(2+)</name>
        <dbReference type="ChEBI" id="CHEBI:18420"/>
        <label>1</label>
    </ligand>
</feature>
<feature type="binding site" evidence="2">
    <location>
        <position position="261"/>
    </location>
    <ligand>
        <name>Mg(2+)</name>
        <dbReference type="ChEBI" id="CHEBI:18420"/>
        <label>1</label>
    </ligand>
</feature>
<feature type="binding site" evidence="2">
    <location>
        <position position="261"/>
    </location>
    <ligand>
        <name>Mg(2+)</name>
        <dbReference type="ChEBI" id="CHEBI:18420"/>
        <label>2</label>
    </ligand>
</feature>
<feature type="binding site" evidence="2">
    <location>
        <position position="263"/>
    </location>
    <ligand>
        <name>Mg(2+)</name>
        <dbReference type="ChEBI" id="CHEBI:18420"/>
        <label>2</label>
    </ligand>
</feature>
<keyword id="KW-0067">ATP-binding</keyword>
<keyword id="KW-0133">Cell shape</keyword>
<keyword id="KW-0961">Cell wall biogenesis/degradation</keyword>
<keyword id="KW-0963">Cytoplasm</keyword>
<keyword id="KW-0436">Ligase</keyword>
<keyword id="KW-0460">Magnesium</keyword>
<keyword id="KW-0464">Manganese</keyword>
<keyword id="KW-0479">Metal-binding</keyword>
<keyword id="KW-0547">Nucleotide-binding</keyword>
<keyword id="KW-0573">Peptidoglycan synthesis</keyword>
<protein>
    <recommendedName>
        <fullName evidence="2">D-alanine--D-alanine ligase</fullName>
        <ecNumber evidence="2">6.3.2.4</ecNumber>
    </recommendedName>
    <alternativeName>
        <fullName evidence="2">D-Ala-D-Ala ligase</fullName>
    </alternativeName>
    <alternativeName>
        <fullName evidence="2">D-alanylalanine synthetase</fullName>
    </alternativeName>
</protein>
<gene>
    <name evidence="2" type="primary">ddl</name>
    <name type="ordered locus">CGSHiEE_06350</name>
</gene>
<evidence type="ECO:0000250" key="1"/>
<evidence type="ECO:0000255" key="2">
    <source>
        <dbReference type="HAMAP-Rule" id="MF_00047"/>
    </source>
</evidence>
<name>DDL_HAEIE</name>
<accession>A5UCW6</accession>
<comment type="function">
    <text evidence="2">Cell wall formation.</text>
</comment>
<comment type="catalytic activity">
    <reaction evidence="2">
        <text>2 D-alanine + ATP = D-alanyl-D-alanine + ADP + phosphate + H(+)</text>
        <dbReference type="Rhea" id="RHEA:11224"/>
        <dbReference type="ChEBI" id="CHEBI:15378"/>
        <dbReference type="ChEBI" id="CHEBI:30616"/>
        <dbReference type="ChEBI" id="CHEBI:43474"/>
        <dbReference type="ChEBI" id="CHEBI:57416"/>
        <dbReference type="ChEBI" id="CHEBI:57822"/>
        <dbReference type="ChEBI" id="CHEBI:456216"/>
        <dbReference type="EC" id="6.3.2.4"/>
    </reaction>
</comment>
<comment type="cofactor">
    <cofactor evidence="1">
        <name>Mg(2+)</name>
        <dbReference type="ChEBI" id="CHEBI:18420"/>
    </cofactor>
    <cofactor evidence="1">
        <name>Mn(2+)</name>
        <dbReference type="ChEBI" id="CHEBI:29035"/>
    </cofactor>
    <text evidence="1">Binds 2 magnesium or manganese ions per subunit.</text>
</comment>
<comment type="pathway">
    <text evidence="2">Cell wall biogenesis; peptidoglycan biosynthesis.</text>
</comment>
<comment type="subcellular location">
    <subcellularLocation>
        <location evidence="2">Cytoplasm</location>
    </subcellularLocation>
</comment>
<comment type="similarity">
    <text evidence="2">Belongs to the D-alanine--D-alanine ligase family.</text>
</comment>
<organism>
    <name type="scientific">Haemophilus influenzae (strain PittEE)</name>
    <dbReference type="NCBI Taxonomy" id="374930"/>
    <lineage>
        <taxon>Bacteria</taxon>
        <taxon>Pseudomonadati</taxon>
        <taxon>Pseudomonadota</taxon>
        <taxon>Gammaproteobacteria</taxon>
        <taxon>Pasteurellales</taxon>
        <taxon>Pasteurellaceae</taxon>
        <taxon>Haemophilus</taxon>
    </lineage>
</organism>
<dbReference type="EC" id="6.3.2.4" evidence="2"/>
<dbReference type="EMBL" id="CP000671">
    <property type="protein sequence ID" value="ABQ98617.1"/>
    <property type="molecule type" value="Genomic_DNA"/>
</dbReference>
<dbReference type="SMR" id="A5UCW6"/>
<dbReference type="KEGG" id="hip:CGSHiEE_06350"/>
<dbReference type="HOGENOM" id="CLU_039268_1_2_6"/>
<dbReference type="UniPathway" id="UPA00219"/>
<dbReference type="GO" id="GO:0005829">
    <property type="term" value="C:cytosol"/>
    <property type="evidence" value="ECO:0007669"/>
    <property type="project" value="TreeGrafter"/>
</dbReference>
<dbReference type="GO" id="GO:0005524">
    <property type="term" value="F:ATP binding"/>
    <property type="evidence" value="ECO:0007669"/>
    <property type="project" value="UniProtKB-KW"/>
</dbReference>
<dbReference type="GO" id="GO:0008716">
    <property type="term" value="F:D-alanine-D-alanine ligase activity"/>
    <property type="evidence" value="ECO:0007669"/>
    <property type="project" value="UniProtKB-UniRule"/>
</dbReference>
<dbReference type="GO" id="GO:0046872">
    <property type="term" value="F:metal ion binding"/>
    <property type="evidence" value="ECO:0007669"/>
    <property type="project" value="UniProtKB-KW"/>
</dbReference>
<dbReference type="GO" id="GO:0071555">
    <property type="term" value="P:cell wall organization"/>
    <property type="evidence" value="ECO:0007669"/>
    <property type="project" value="UniProtKB-KW"/>
</dbReference>
<dbReference type="GO" id="GO:0009252">
    <property type="term" value="P:peptidoglycan biosynthetic process"/>
    <property type="evidence" value="ECO:0007669"/>
    <property type="project" value="UniProtKB-UniRule"/>
</dbReference>
<dbReference type="GO" id="GO:0008360">
    <property type="term" value="P:regulation of cell shape"/>
    <property type="evidence" value="ECO:0007669"/>
    <property type="project" value="UniProtKB-KW"/>
</dbReference>
<dbReference type="FunFam" id="3.30.1490.20:FF:000007">
    <property type="entry name" value="D-alanine--D-alanine ligase"/>
    <property type="match status" value="1"/>
</dbReference>
<dbReference type="FunFam" id="3.30.470.20:FF:000008">
    <property type="entry name" value="D-alanine--D-alanine ligase"/>
    <property type="match status" value="1"/>
</dbReference>
<dbReference type="FunFam" id="3.40.50.20:FF:000013">
    <property type="entry name" value="D-alanine--D-alanine ligase"/>
    <property type="match status" value="1"/>
</dbReference>
<dbReference type="Gene3D" id="3.40.50.20">
    <property type="match status" value="1"/>
</dbReference>
<dbReference type="Gene3D" id="3.30.1490.20">
    <property type="entry name" value="ATP-grasp fold, A domain"/>
    <property type="match status" value="1"/>
</dbReference>
<dbReference type="Gene3D" id="3.30.470.20">
    <property type="entry name" value="ATP-grasp fold, B domain"/>
    <property type="match status" value="1"/>
</dbReference>
<dbReference type="HAMAP" id="MF_00047">
    <property type="entry name" value="Dala_Dala_lig"/>
    <property type="match status" value="1"/>
</dbReference>
<dbReference type="InterPro" id="IPR011761">
    <property type="entry name" value="ATP-grasp"/>
</dbReference>
<dbReference type="InterPro" id="IPR013815">
    <property type="entry name" value="ATP_grasp_subdomain_1"/>
</dbReference>
<dbReference type="InterPro" id="IPR000291">
    <property type="entry name" value="D-Ala_lig_Van_CS"/>
</dbReference>
<dbReference type="InterPro" id="IPR005905">
    <property type="entry name" value="D_ala_D_ala"/>
</dbReference>
<dbReference type="InterPro" id="IPR011095">
    <property type="entry name" value="Dala_Dala_lig_C"/>
</dbReference>
<dbReference type="InterPro" id="IPR011127">
    <property type="entry name" value="Dala_Dala_lig_N"/>
</dbReference>
<dbReference type="InterPro" id="IPR016185">
    <property type="entry name" value="PreATP-grasp_dom_sf"/>
</dbReference>
<dbReference type="NCBIfam" id="TIGR01205">
    <property type="entry name" value="D_ala_D_alaTIGR"/>
    <property type="match status" value="1"/>
</dbReference>
<dbReference type="NCBIfam" id="NF002378">
    <property type="entry name" value="PRK01372.1"/>
    <property type="match status" value="1"/>
</dbReference>
<dbReference type="PANTHER" id="PTHR23132">
    <property type="entry name" value="D-ALANINE--D-ALANINE LIGASE"/>
    <property type="match status" value="1"/>
</dbReference>
<dbReference type="PANTHER" id="PTHR23132:SF23">
    <property type="entry name" value="D-ALANINE--D-ALANINE LIGASE B"/>
    <property type="match status" value="1"/>
</dbReference>
<dbReference type="Pfam" id="PF07478">
    <property type="entry name" value="Dala_Dala_lig_C"/>
    <property type="match status" value="1"/>
</dbReference>
<dbReference type="Pfam" id="PF01820">
    <property type="entry name" value="Dala_Dala_lig_N"/>
    <property type="match status" value="1"/>
</dbReference>
<dbReference type="PIRSF" id="PIRSF039102">
    <property type="entry name" value="Ddl/VanB"/>
    <property type="match status" value="1"/>
</dbReference>
<dbReference type="SUPFAM" id="SSF56059">
    <property type="entry name" value="Glutathione synthetase ATP-binding domain-like"/>
    <property type="match status" value="1"/>
</dbReference>
<dbReference type="SUPFAM" id="SSF52440">
    <property type="entry name" value="PreATP-grasp domain"/>
    <property type="match status" value="1"/>
</dbReference>
<dbReference type="PROSITE" id="PS50975">
    <property type="entry name" value="ATP_GRASP"/>
    <property type="match status" value="1"/>
</dbReference>
<dbReference type="PROSITE" id="PS00843">
    <property type="entry name" value="DALA_DALA_LIGASE_1"/>
    <property type="match status" value="1"/>
</dbReference>
<dbReference type="PROSITE" id="PS00844">
    <property type="entry name" value="DALA_DALA_LIGASE_2"/>
    <property type="match status" value="1"/>
</dbReference>
<reference key="1">
    <citation type="journal article" date="2007" name="Genome Biol.">
        <title>Characterization and modeling of the Haemophilus influenzae core and supragenomes based on the complete genomic sequences of Rd and 12 clinical nontypeable strains.</title>
        <authorList>
            <person name="Hogg J.S."/>
            <person name="Hu F.Z."/>
            <person name="Janto B."/>
            <person name="Boissy R."/>
            <person name="Hayes J."/>
            <person name="Keefe R."/>
            <person name="Post J.C."/>
            <person name="Ehrlich G.D."/>
        </authorList>
    </citation>
    <scope>NUCLEOTIDE SEQUENCE [LARGE SCALE GENOMIC DNA]</scope>
    <source>
        <strain>PittEE</strain>
    </source>
</reference>
<proteinExistence type="inferred from homology"/>
<sequence length="297" mass="32529">MLLGGTSAEREVSFNSGKAVLEALLKQGYNAHPIDPKEYNVANLKKDGFNRAFNILHGRGGEDGTMQGLLEQIGLPYTGCGVMASALTMDKMRTKMLWKAFGLPVADMKVVTRETFAELDPQAVVAKLGLPLMVKPSLEGSSVGLTKVKAVEELKSAVEYALKFDNTILIEEWLAGDELTVSVLDNQVLPAIRIVPEGEFYDYEAKYISDNTQYFCPAGLTPEREQELAILVKRAYDAVGCRGWSRIDVMCDAKGNFRLVEVNTNPGMTSHSLFPKSAATVGISFEQLVVKILELSL</sequence>